<protein>
    <recommendedName>
        <fullName evidence="1">D-tagatose-1,6-bisphosphate aldolase subunit KbaZ</fullName>
    </recommendedName>
</protein>
<name>KBAZ_ECOUT</name>
<feature type="chain" id="PRO_0000372529" description="D-tagatose-1,6-bisphosphate aldolase subunit KbaZ">
    <location>
        <begin position="1"/>
        <end position="426"/>
    </location>
</feature>
<gene>
    <name evidence="1" type="primary">kbaZ</name>
    <name type="synonym">agaZ</name>
    <name type="ordered locus">UTI89_C3561</name>
</gene>
<proteinExistence type="inferred from homology"/>
<comment type="function">
    <text evidence="1">Component of the tagatose-1,6-bisphosphate aldolase KbaYZ that is required for full activity and stability of the Y subunit. Could have a chaperone-like function for the proper and stable folding of KbaY. When expressed alone, KbaZ does not show any aldolase activity.</text>
</comment>
<comment type="pathway">
    <text evidence="1">Carbohydrate metabolism; D-tagatose 6-phosphate degradation; D-glyceraldehyde 3-phosphate and glycerone phosphate from D-tagatose 6-phosphate: step 2/2.</text>
</comment>
<comment type="subunit">
    <text evidence="1">Forms a complex with KbaY.</text>
</comment>
<comment type="similarity">
    <text evidence="1">Belongs to the GatZ/KbaZ family. KbaZ subfamily.</text>
</comment>
<organism>
    <name type="scientific">Escherichia coli (strain UTI89 / UPEC)</name>
    <dbReference type="NCBI Taxonomy" id="364106"/>
    <lineage>
        <taxon>Bacteria</taxon>
        <taxon>Pseudomonadati</taxon>
        <taxon>Pseudomonadota</taxon>
        <taxon>Gammaproteobacteria</taxon>
        <taxon>Enterobacterales</taxon>
        <taxon>Enterobacteriaceae</taxon>
        <taxon>Escherichia</taxon>
    </lineage>
</organism>
<sequence>MKHLTEMVRQHKAGKTNGIYAVCSAHPLVLEAAIRYASANQTPLLIEATSNQVDQFGGYTGMTPADFRGFVCQLADSLNFPQDALILGGDHLGPNRWQNLPAAQAMANADDLIKSYVAAGFKKIHLDCSMSCQDDPIPLTDDIVAERAARLAKVAEETCREHFGEADLEYVIGTEVPVPGGAHETLSELAVTTPDAARATLEAHRHAFEKQGLNAIWPRIIALVVQPGVEFDHTNVIDYQPAKAAALSQMVENYETLIFEAHSTDYQTPQSLRQLVIDHFAILKVGPALTFALREALFSLAAIEEELVPAKACSGLRQVLENVMLDRPEYWQSHYHGDGNARRLARGYSYSDRVRYYWPDSQIDDAFAHLVRNLADSPIPLPLISQYLPLQYVKVRSGELQPTPRELIINHIQDILAQYHTACEGQ</sequence>
<reference key="1">
    <citation type="journal article" date="2006" name="Proc. Natl. Acad. Sci. U.S.A.">
        <title>Identification of genes subject to positive selection in uropathogenic strains of Escherichia coli: a comparative genomics approach.</title>
        <authorList>
            <person name="Chen S.L."/>
            <person name="Hung C.-S."/>
            <person name="Xu J."/>
            <person name="Reigstad C.S."/>
            <person name="Magrini V."/>
            <person name="Sabo A."/>
            <person name="Blasiar D."/>
            <person name="Bieri T."/>
            <person name="Meyer R.R."/>
            <person name="Ozersky P."/>
            <person name="Armstrong J.R."/>
            <person name="Fulton R.S."/>
            <person name="Latreille J.P."/>
            <person name="Spieth J."/>
            <person name="Hooton T.M."/>
            <person name="Mardis E.R."/>
            <person name="Hultgren S.J."/>
            <person name="Gordon J.I."/>
        </authorList>
    </citation>
    <scope>NUCLEOTIDE SEQUENCE [LARGE SCALE GENOMIC DNA]</scope>
    <source>
        <strain>UTI89 / UPEC</strain>
    </source>
</reference>
<dbReference type="EMBL" id="CP000243">
    <property type="protein sequence ID" value="ABE09007.1"/>
    <property type="molecule type" value="Genomic_DNA"/>
</dbReference>
<dbReference type="RefSeq" id="WP_000681931.1">
    <property type="nucleotide sequence ID" value="NZ_CP064825.1"/>
</dbReference>
<dbReference type="SMR" id="Q1R6K7"/>
<dbReference type="KEGG" id="eci:UTI89_C3561"/>
<dbReference type="HOGENOM" id="CLU_053334_0_0_6"/>
<dbReference type="UniPathway" id="UPA00704">
    <property type="reaction ID" value="UER00716"/>
</dbReference>
<dbReference type="Proteomes" id="UP000001952">
    <property type="component" value="Chromosome"/>
</dbReference>
<dbReference type="GO" id="GO:0005886">
    <property type="term" value="C:plasma membrane"/>
    <property type="evidence" value="ECO:0007669"/>
    <property type="project" value="TreeGrafter"/>
</dbReference>
<dbReference type="GO" id="GO:0005975">
    <property type="term" value="P:carbohydrate metabolic process"/>
    <property type="evidence" value="ECO:0007669"/>
    <property type="project" value="InterPro"/>
</dbReference>
<dbReference type="GO" id="GO:2001059">
    <property type="term" value="P:D-tagatose 6-phosphate catabolic process"/>
    <property type="evidence" value="ECO:0007669"/>
    <property type="project" value="UniProtKB-UniRule"/>
</dbReference>
<dbReference type="GO" id="GO:0009401">
    <property type="term" value="P:phosphoenolpyruvate-dependent sugar phosphotransferase system"/>
    <property type="evidence" value="ECO:0007669"/>
    <property type="project" value="TreeGrafter"/>
</dbReference>
<dbReference type="FunFam" id="3.20.20.70:FF:000141">
    <property type="entry name" value="D-tagatose-1,6-bisphosphate aldolase subunit GatZ"/>
    <property type="match status" value="1"/>
</dbReference>
<dbReference type="Gene3D" id="3.20.20.70">
    <property type="entry name" value="Aldolase class I"/>
    <property type="match status" value="1"/>
</dbReference>
<dbReference type="Gene3D" id="1.10.400.20">
    <property type="entry name" value="putative tagatose 6-phosphate kinase domain like"/>
    <property type="match status" value="1"/>
</dbReference>
<dbReference type="HAMAP" id="MF_01295">
    <property type="entry name" value="Tagatose_aldol_KbaZ"/>
    <property type="match status" value="1"/>
</dbReference>
<dbReference type="InterPro" id="IPR013785">
    <property type="entry name" value="Aldolase_TIM"/>
</dbReference>
<dbReference type="InterPro" id="IPR012062">
    <property type="entry name" value="GatZ/KbaZ-like"/>
</dbReference>
<dbReference type="InterPro" id="IPR050303">
    <property type="entry name" value="GatZ_KbaZ_carbometab"/>
</dbReference>
<dbReference type="InterPro" id="IPR023435">
    <property type="entry name" value="TagBP_ald_KbaZ"/>
</dbReference>
<dbReference type="NCBIfam" id="TIGR02810">
    <property type="entry name" value="agaZ_gatZ"/>
    <property type="match status" value="1"/>
</dbReference>
<dbReference type="NCBIfam" id="NF012002">
    <property type="entry name" value="PRK15458.1"/>
    <property type="match status" value="1"/>
</dbReference>
<dbReference type="PANTHER" id="PTHR32502:SF2">
    <property type="entry name" value="D-TAGATOSE-1,6-BISPHOSPHATE ALDOLASE SUBUNIT KBAZ"/>
    <property type="match status" value="1"/>
</dbReference>
<dbReference type="PANTHER" id="PTHR32502">
    <property type="entry name" value="N-ACETYLGALACTOSAMINE PERMEASE II COMPONENT-RELATED"/>
    <property type="match status" value="1"/>
</dbReference>
<dbReference type="Pfam" id="PF08013">
    <property type="entry name" value="GatZ_KbaZ-like"/>
    <property type="match status" value="1"/>
</dbReference>
<dbReference type="PIRSF" id="PIRSF009264">
    <property type="entry name" value="TagBP_ald_AgaZ"/>
    <property type="match status" value="1"/>
</dbReference>
<dbReference type="SUPFAM" id="SSF51569">
    <property type="entry name" value="Aldolase"/>
    <property type="match status" value="1"/>
</dbReference>
<accession>Q1R6K7</accession>
<evidence type="ECO:0000255" key="1">
    <source>
        <dbReference type="HAMAP-Rule" id="MF_01295"/>
    </source>
</evidence>